<name>Y6968_DICDI</name>
<evidence type="ECO:0000255" key="1"/>
<evidence type="ECO:0000256" key="2">
    <source>
        <dbReference type="SAM" id="MobiDB-lite"/>
    </source>
</evidence>
<feature type="chain" id="PRO_0000348510" description="Uncharacterized protein DDB_G0286423">
    <location>
        <begin position="1"/>
        <end position="506"/>
    </location>
</feature>
<feature type="region of interest" description="Disordered" evidence="2">
    <location>
        <begin position="104"/>
        <end position="144"/>
    </location>
</feature>
<feature type="region of interest" description="Disordered" evidence="2">
    <location>
        <begin position="397"/>
        <end position="456"/>
    </location>
</feature>
<feature type="coiled-coil region" evidence="1">
    <location>
        <begin position="405"/>
        <end position="455"/>
    </location>
</feature>
<feature type="compositionally biased region" description="Low complexity" evidence="2">
    <location>
        <begin position="130"/>
        <end position="144"/>
    </location>
</feature>
<feature type="compositionally biased region" description="Basic and acidic residues" evidence="2">
    <location>
        <begin position="405"/>
        <end position="443"/>
    </location>
</feature>
<protein>
    <recommendedName>
        <fullName>Uncharacterized protein DDB_G0286423</fullName>
    </recommendedName>
</protein>
<sequence length="506" mass="58050">MNSEFSVGLSNTISSLFKDDEDYQIVQASELLTYLSNKGFYPPLVIQNIMIDILESERSNDPAVVYNIIKVLNSLKDEGYRIELENWDLIISVFISLNIHLSRPNSSSPPTTTTTTTTTGERAGKKLKTESSPTLSSSSLATSSRGVNTVSDSVAKIPFLSSKVLATYFISIYESMNMVTSSFTDSHPLHRLFKVGNRAHILFSEVMSIIDNCDHDTLREMSKFVTLIYRGGKSWEDSILPSISQGFRNIKRCYRRALFCQLMPFGDEKTKLLKGMLEYFYPTGSGNEFVGFNKRKRGGTKELIEELTPWFKKISTKAIKHCSKTPSSDDQFYDSYNYHDNQNDDNDTNYLNLESPIGEIEVFVIMICQLFQSTIISSTKQYGLKLKNQVQNKQQQQQQKLTSIIKDEDKNEKENKSENEEKEKEKEKEKEKEKEKEKEKEKENEEGEEDNGDQLPYQVPWQTVYEQFKEFSKTILTTCEKICKNRTLIESNLNGVETILKFKSTP</sequence>
<gene>
    <name type="ORF">DDB_G0286423</name>
</gene>
<dbReference type="EMBL" id="AAFI02000085">
    <property type="protein sequence ID" value="EAL64236.1"/>
    <property type="molecule type" value="Genomic_DNA"/>
</dbReference>
<dbReference type="RefSeq" id="XP_637746.1">
    <property type="nucleotide sequence ID" value="XM_632654.1"/>
</dbReference>
<dbReference type="FunCoup" id="Q54LT4">
    <property type="interactions" value="435"/>
</dbReference>
<dbReference type="PaxDb" id="44689-DDB0186968"/>
<dbReference type="EnsemblProtists" id="EAL64236">
    <property type="protein sequence ID" value="EAL64236"/>
    <property type="gene ID" value="DDB_G0286423"/>
</dbReference>
<dbReference type="GeneID" id="8625612"/>
<dbReference type="KEGG" id="ddi:DDB_G0286423"/>
<dbReference type="dictyBase" id="DDB_G0286423"/>
<dbReference type="VEuPathDB" id="AmoebaDB:DDB_G0286423"/>
<dbReference type="eggNOG" id="ENOG502RHJ9">
    <property type="taxonomic scope" value="Eukaryota"/>
</dbReference>
<dbReference type="HOGENOM" id="CLU_539102_0_0_1"/>
<dbReference type="InParanoid" id="Q54LT4"/>
<dbReference type="OMA" id="YPSHIRN"/>
<dbReference type="PRO" id="PR:Q54LT4"/>
<dbReference type="Proteomes" id="UP000002195">
    <property type="component" value="Chromosome 4"/>
</dbReference>
<proteinExistence type="predicted"/>
<accession>Q54LT4</accession>
<reference key="1">
    <citation type="journal article" date="2005" name="Nature">
        <title>The genome of the social amoeba Dictyostelium discoideum.</title>
        <authorList>
            <person name="Eichinger L."/>
            <person name="Pachebat J.A."/>
            <person name="Gloeckner G."/>
            <person name="Rajandream M.A."/>
            <person name="Sucgang R."/>
            <person name="Berriman M."/>
            <person name="Song J."/>
            <person name="Olsen R."/>
            <person name="Szafranski K."/>
            <person name="Xu Q."/>
            <person name="Tunggal B."/>
            <person name="Kummerfeld S."/>
            <person name="Madera M."/>
            <person name="Konfortov B.A."/>
            <person name="Rivero F."/>
            <person name="Bankier A.T."/>
            <person name="Lehmann R."/>
            <person name="Hamlin N."/>
            <person name="Davies R."/>
            <person name="Gaudet P."/>
            <person name="Fey P."/>
            <person name="Pilcher K."/>
            <person name="Chen G."/>
            <person name="Saunders D."/>
            <person name="Sodergren E.J."/>
            <person name="Davis P."/>
            <person name="Kerhornou A."/>
            <person name="Nie X."/>
            <person name="Hall N."/>
            <person name="Anjard C."/>
            <person name="Hemphill L."/>
            <person name="Bason N."/>
            <person name="Farbrother P."/>
            <person name="Desany B."/>
            <person name="Just E."/>
            <person name="Morio T."/>
            <person name="Rost R."/>
            <person name="Churcher C.M."/>
            <person name="Cooper J."/>
            <person name="Haydock S."/>
            <person name="van Driessche N."/>
            <person name="Cronin A."/>
            <person name="Goodhead I."/>
            <person name="Muzny D.M."/>
            <person name="Mourier T."/>
            <person name="Pain A."/>
            <person name="Lu M."/>
            <person name="Harper D."/>
            <person name="Lindsay R."/>
            <person name="Hauser H."/>
            <person name="James K.D."/>
            <person name="Quiles M."/>
            <person name="Madan Babu M."/>
            <person name="Saito T."/>
            <person name="Buchrieser C."/>
            <person name="Wardroper A."/>
            <person name="Felder M."/>
            <person name="Thangavelu M."/>
            <person name="Johnson D."/>
            <person name="Knights A."/>
            <person name="Loulseged H."/>
            <person name="Mungall K.L."/>
            <person name="Oliver K."/>
            <person name="Price C."/>
            <person name="Quail M.A."/>
            <person name="Urushihara H."/>
            <person name="Hernandez J."/>
            <person name="Rabbinowitsch E."/>
            <person name="Steffen D."/>
            <person name="Sanders M."/>
            <person name="Ma J."/>
            <person name="Kohara Y."/>
            <person name="Sharp S."/>
            <person name="Simmonds M.N."/>
            <person name="Spiegler S."/>
            <person name="Tivey A."/>
            <person name="Sugano S."/>
            <person name="White B."/>
            <person name="Walker D."/>
            <person name="Woodward J.R."/>
            <person name="Winckler T."/>
            <person name="Tanaka Y."/>
            <person name="Shaulsky G."/>
            <person name="Schleicher M."/>
            <person name="Weinstock G.M."/>
            <person name="Rosenthal A."/>
            <person name="Cox E.C."/>
            <person name="Chisholm R.L."/>
            <person name="Gibbs R.A."/>
            <person name="Loomis W.F."/>
            <person name="Platzer M."/>
            <person name="Kay R.R."/>
            <person name="Williams J.G."/>
            <person name="Dear P.H."/>
            <person name="Noegel A.A."/>
            <person name="Barrell B.G."/>
            <person name="Kuspa A."/>
        </authorList>
    </citation>
    <scope>NUCLEOTIDE SEQUENCE [LARGE SCALE GENOMIC DNA]</scope>
    <source>
        <strain>AX4</strain>
    </source>
</reference>
<keyword id="KW-0175">Coiled coil</keyword>
<keyword id="KW-1185">Reference proteome</keyword>
<organism>
    <name type="scientific">Dictyostelium discoideum</name>
    <name type="common">Social amoeba</name>
    <dbReference type="NCBI Taxonomy" id="44689"/>
    <lineage>
        <taxon>Eukaryota</taxon>
        <taxon>Amoebozoa</taxon>
        <taxon>Evosea</taxon>
        <taxon>Eumycetozoa</taxon>
        <taxon>Dictyostelia</taxon>
        <taxon>Dictyosteliales</taxon>
        <taxon>Dictyosteliaceae</taxon>
        <taxon>Dictyostelium</taxon>
    </lineage>
</organism>